<feature type="chain" id="PRO_0000140717" description="3-dehydroquinate synthase">
    <location>
        <begin position="1"/>
        <end position="363"/>
    </location>
</feature>
<feature type="binding site" evidence="1">
    <location>
        <begin position="74"/>
        <end position="79"/>
    </location>
    <ligand>
        <name>NAD(+)</name>
        <dbReference type="ChEBI" id="CHEBI:57540"/>
    </ligand>
</feature>
<feature type="binding site" evidence="1">
    <location>
        <begin position="108"/>
        <end position="112"/>
    </location>
    <ligand>
        <name>NAD(+)</name>
        <dbReference type="ChEBI" id="CHEBI:57540"/>
    </ligand>
</feature>
<feature type="binding site" evidence="1">
    <location>
        <begin position="132"/>
        <end position="133"/>
    </location>
    <ligand>
        <name>NAD(+)</name>
        <dbReference type="ChEBI" id="CHEBI:57540"/>
    </ligand>
</feature>
<feature type="binding site" evidence="1">
    <location>
        <position position="145"/>
    </location>
    <ligand>
        <name>NAD(+)</name>
        <dbReference type="ChEBI" id="CHEBI:57540"/>
    </ligand>
</feature>
<feature type="binding site" evidence="1">
    <location>
        <position position="154"/>
    </location>
    <ligand>
        <name>NAD(+)</name>
        <dbReference type="ChEBI" id="CHEBI:57540"/>
    </ligand>
</feature>
<feature type="binding site" evidence="1">
    <location>
        <begin position="172"/>
        <end position="175"/>
    </location>
    <ligand>
        <name>NAD(+)</name>
        <dbReference type="ChEBI" id="CHEBI:57540"/>
    </ligand>
</feature>
<feature type="binding site" evidence="1">
    <location>
        <position position="187"/>
    </location>
    <ligand>
        <name>Zn(2+)</name>
        <dbReference type="ChEBI" id="CHEBI:29105"/>
    </ligand>
</feature>
<feature type="binding site" evidence="1">
    <location>
        <position position="250"/>
    </location>
    <ligand>
        <name>Zn(2+)</name>
        <dbReference type="ChEBI" id="CHEBI:29105"/>
    </ligand>
</feature>
<feature type="binding site" evidence="1">
    <location>
        <position position="267"/>
    </location>
    <ligand>
        <name>Zn(2+)</name>
        <dbReference type="ChEBI" id="CHEBI:29105"/>
    </ligand>
</feature>
<accession>P57604</accession>
<protein>
    <recommendedName>
        <fullName evidence="1">3-dehydroquinate synthase</fullName>
        <shortName evidence="1">DHQS</shortName>
        <ecNumber evidence="1">4.2.3.4</ecNumber>
    </recommendedName>
</protein>
<name>AROB_BUCAI</name>
<evidence type="ECO:0000255" key="1">
    <source>
        <dbReference type="HAMAP-Rule" id="MF_00110"/>
    </source>
</evidence>
<evidence type="ECO:0000305" key="2"/>
<organism>
    <name type="scientific">Buchnera aphidicola subsp. Acyrthosiphon pisum (strain APS)</name>
    <name type="common">Acyrthosiphon pisum symbiotic bacterium</name>
    <dbReference type="NCBI Taxonomy" id="107806"/>
    <lineage>
        <taxon>Bacteria</taxon>
        <taxon>Pseudomonadati</taxon>
        <taxon>Pseudomonadota</taxon>
        <taxon>Gammaproteobacteria</taxon>
        <taxon>Enterobacterales</taxon>
        <taxon>Erwiniaceae</taxon>
        <taxon>Buchnera</taxon>
    </lineage>
</organism>
<reference key="1">
    <citation type="journal article" date="2000" name="Nature">
        <title>Genome sequence of the endocellular bacterial symbiont of aphids Buchnera sp. APS.</title>
        <authorList>
            <person name="Shigenobu S."/>
            <person name="Watanabe H."/>
            <person name="Hattori M."/>
            <person name="Sakaki Y."/>
            <person name="Ishikawa H."/>
        </authorList>
    </citation>
    <scope>NUCLEOTIDE SEQUENCE [LARGE SCALE GENOMIC DNA]</scope>
    <source>
        <strain>APS</strain>
    </source>
</reference>
<sequence length="363" mass="40297">MKIVERLQVVLGERSYPISIGAGIIQEDDIFWPLKPGDQAMLVTNKTLANLLKDKVFYHLRKSGIKIDQVILSDGEQYKTLNEMELIISALLEKKHARDTTLIALGGGVIGDLAGFAASVYQRGVRFIQIPTTLLSQVDASVGGKTAVNHLLGKNMIGSFWQPSSVIIDIDCLKTLPYNELVSGMAEVIKYAIVFDKTFFCWLEENIESILSLNHTAMSYCIKKCCELKSQLIALDERENNLRALLNLGHTYGHAIEVHAGYGNWLHGEAISVGMVMAARTSELLGHLKTIDFKRILVLLKRTGLPIKGPKNMSAASYLPYMMRDKKVISGEMRLVLPLSIGKAEIYSNIDKNIILTAIKHSQ</sequence>
<comment type="function">
    <text evidence="1">Catalyzes the conversion of 3-deoxy-D-arabino-heptulosonate 7-phosphate (DAHP) to dehydroquinate (DHQ).</text>
</comment>
<comment type="catalytic activity">
    <reaction evidence="1">
        <text>7-phospho-2-dehydro-3-deoxy-D-arabino-heptonate = 3-dehydroquinate + phosphate</text>
        <dbReference type="Rhea" id="RHEA:21968"/>
        <dbReference type="ChEBI" id="CHEBI:32364"/>
        <dbReference type="ChEBI" id="CHEBI:43474"/>
        <dbReference type="ChEBI" id="CHEBI:58394"/>
        <dbReference type="EC" id="4.2.3.4"/>
    </reaction>
</comment>
<comment type="cofactor">
    <cofactor evidence="1">
        <name>NAD(+)</name>
        <dbReference type="ChEBI" id="CHEBI:57540"/>
    </cofactor>
</comment>
<comment type="cofactor">
    <cofactor evidence="1">
        <name>Co(2+)</name>
        <dbReference type="ChEBI" id="CHEBI:48828"/>
    </cofactor>
    <cofactor evidence="1">
        <name>Zn(2+)</name>
        <dbReference type="ChEBI" id="CHEBI:29105"/>
    </cofactor>
    <text evidence="1">Binds 1 divalent metal cation per subunit. Can use either Co(2+) or Zn(2+).</text>
</comment>
<comment type="pathway">
    <text evidence="1">Metabolic intermediate biosynthesis; chorismate biosynthesis; chorismate from D-erythrose 4-phosphate and phosphoenolpyruvate: step 2/7.</text>
</comment>
<comment type="subcellular location">
    <subcellularLocation>
        <location evidence="1">Cytoplasm</location>
    </subcellularLocation>
</comment>
<comment type="similarity">
    <text evidence="1 2">Belongs to the sugar phosphate cyclases superfamily. Dehydroquinate synthase family.</text>
</comment>
<dbReference type="EC" id="4.2.3.4" evidence="1"/>
<dbReference type="EMBL" id="BA000003">
    <property type="protein sequence ID" value="BAB13231.1"/>
    <property type="molecule type" value="Genomic_DNA"/>
</dbReference>
<dbReference type="RefSeq" id="NP_240345.1">
    <property type="nucleotide sequence ID" value="NC_002528.1"/>
</dbReference>
<dbReference type="RefSeq" id="WP_009874489.1">
    <property type="nucleotide sequence ID" value="NC_002528.1"/>
</dbReference>
<dbReference type="SMR" id="P57604"/>
<dbReference type="STRING" id="563178.BUAP5A_531"/>
<dbReference type="EnsemblBacteria" id="BAB13231">
    <property type="protein sequence ID" value="BAB13231"/>
    <property type="gene ID" value="BAB13231"/>
</dbReference>
<dbReference type="KEGG" id="buc:BU538"/>
<dbReference type="PATRIC" id="fig|107806.10.peg.543"/>
<dbReference type="eggNOG" id="COG0337">
    <property type="taxonomic scope" value="Bacteria"/>
</dbReference>
<dbReference type="HOGENOM" id="CLU_001201_0_2_6"/>
<dbReference type="UniPathway" id="UPA00053">
    <property type="reaction ID" value="UER00085"/>
</dbReference>
<dbReference type="Proteomes" id="UP000001806">
    <property type="component" value="Chromosome"/>
</dbReference>
<dbReference type="GO" id="GO:0005737">
    <property type="term" value="C:cytoplasm"/>
    <property type="evidence" value="ECO:0007669"/>
    <property type="project" value="UniProtKB-SubCell"/>
</dbReference>
<dbReference type="GO" id="GO:0003856">
    <property type="term" value="F:3-dehydroquinate synthase activity"/>
    <property type="evidence" value="ECO:0007669"/>
    <property type="project" value="UniProtKB-UniRule"/>
</dbReference>
<dbReference type="GO" id="GO:0046872">
    <property type="term" value="F:metal ion binding"/>
    <property type="evidence" value="ECO:0007669"/>
    <property type="project" value="UniProtKB-KW"/>
</dbReference>
<dbReference type="GO" id="GO:0000166">
    <property type="term" value="F:nucleotide binding"/>
    <property type="evidence" value="ECO:0007669"/>
    <property type="project" value="UniProtKB-KW"/>
</dbReference>
<dbReference type="GO" id="GO:0008652">
    <property type="term" value="P:amino acid biosynthetic process"/>
    <property type="evidence" value="ECO:0007669"/>
    <property type="project" value="UniProtKB-KW"/>
</dbReference>
<dbReference type="GO" id="GO:0009073">
    <property type="term" value="P:aromatic amino acid family biosynthetic process"/>
    <property type="evidence" value="ECO:0007669"/>
    <property type="project" value="UniProtKB-KW"/>
</dbReference>
<dbReference type="GO" id="GO:0009423">
    <property type="term" value="P:chorismate biosynthetic process"/>
    <property type="evidence" value="ECO:0007669"/>
    <property type="project" value="UniProtKB-UniRule"/>
</dbReference>
<dbReference type="CDD" id="cd08195">
    <property type="entry name" value="DHQS"/>
    <property type="match status" value="1"/>
</dbReference>
<dbReference type="FunFam" id="1.20.1090.10:FF:000002">
    <property type="entry name" value="3-dehydroquinate synthase"/>
    <property type="match status" value="1"/>
</dbReference>
<dbReference type="FunFam" id="3.40.50.1970:FF:000001">
    <property type="entry name" value="3-dehydroquinate synthase"/>
    <property type="match status" value="1"/>
</dbReference>
<dbReference type="Gene3D" id="3.40.50.1970">
    <property type="match status" value="1"/>
</dbReference>
<dbReference type="Gene3D" id="1.20.1090.10">
    <property type="entry name" value="Dehydroquinate synthase-like - alpha domain"/>
    <property type="match status" value="1"/>
</dbReference>
<dbReference type="HAMAP" id="MF_00110">
    <property type="entry name" value="DHQ_synthase"/>
    <property type="match status" value="1"/>
</dbReference>
<dbReference type="InterPro" id="IPR050071">
    <property type="entry name" value="Dehydroquinate_synthase"/>
</dbReference>
<dbReference type="InterPro" id="IPR016037">
    <property type="entry name" value="DHQ_synth_AroB"/>
</dbReference>
<dbReference type="InterPro" id="IPR030963">
    <property type="entry name" value="DHQ_synth_fam"/>
</dbReference>
<dbReference type="InterPro" id="IPR030960">
    <property type="entry name" value="DHQS/DOIS_N"/>
</dbReference>
<dbReference type="InterPro" id="IPR056179">
    <property type="entry name" value="DHQS_C"/>
</dbReference>
<dbReference type="NCBIfam" id="TIGR01357">
    <property type="entry name" value="aroB"/>
    <property type="match status" value="1"/>
</dbReference>
<dbReference type="PANTHER" id="PTHR43622">
    <property type="entry name" value="3-DEHYDROQUINATE SYNTHASE"/>
    <property type="match status" value="1"/>
</dbReference>
<dbReference type="PANTHER" id="PTHR43622:SF7">
    <property type="entry name" value="3-DEHYDROQUINATE SYNTHASE, CHLOROPLASTIC"/>
    <property type="match status" value="1"/>
</dbReference>
<dbReference type="Pfam" id="PF01761">
    <property type="entry name" value="DHQ_synthase"/>
    <property type="match status" value="1"/>
</dbReference>
<dbReference type="Pfam" id="PF24621">
    <property type="entry name" value="DHQS_C"/>
    <property type="match status" value="1"/>
</dbReference>
<dbReference type="PIRSF" id="PIRSF001455">
    <property type="entry name" value="DHQ_synth"/>
    <property type="match status" value="1"/>
</dbReference>
<dbReference type="SUPFAM" id="SSF56796">
    <property type="entry name" value="Dehydroquinate synthase-like"/>
    <property type="match status" value="1"/>
</dbReference>
<gene>
    <name evidence="1" type="primary">aroB</name>
    <name type="ordered locus">BU538</name>
</gene>
<keyword id="KW-0028">Amino-acid biosynthesis</keyword>
<keyword id="KW-0057">Aromatic amino acid biosynthesis</keyword>
<keyword id="KW-0170">Cobalt</keyword>
<keyword id="KW-0963">Cytoplasm</keyword>
<keyword id="KW-0456">Lyase</keyword>
<keyword id="KW-0479">Metal-binding</keyword>
<keyword id="KW-0520">NAD</keyword>
<keyword id="KW-0547">Nucleotide-binding</keyword>
<keyword id="KW-1185">Reference proteome</keyword>
<keyword id="KW-0862">Zinc</keyword>
<proteinExistence type="inferred from homology"/>